<gene>
    <name evidence="1" type="primary">nuoA2</name>
    <name type="ordered locus">GSU3445</name>
</gene>
<keyword id="KW-0997">Cell inner membrane</keyword>
<keyword id="KW-1003">Cell membrane</keyword>
<keyword id="KW-0472">Membrane</keyword>
<keyword id="KW-0520">NAD</keyword>
<keyword id="KW-0874">Quinone</keyword>
<keyword id="KW-1185">Reference proteome</keyword>
<keyword id="KW-1278">Translocase</keyword>
<keyword id="KW-0812">Transmembrane</keyword>
<keyword id="KW-1133">Transmembrane helix</keyword>
<keyword id="KW-0813">Transport</keyword>
<keyword id="KW-0830">Ubiquinone</keyword>
<name>NUOA2_GEOSL</name>
<reference key="1">
    <citation type="journal article" date="2003" name="Science">
        <title>Genome of Geobacter sulfurreducens: metal reduction in subsurface environments.</title>
        <authorList>
            <person name="Methe B.A."/>
            <person name="Nelson K.E."/>
            <person name="Eisen J.A."/>
            <person name="Paulsen I.T."/>
            <person name="Nelson W.C."/>
            <person name="Heidelberg J.F."/>
            <person name="Wu D."/>
            <person name="Wu M."/>
            <person name="Ward N.L."/>
            <person name="Beanan M.J."/>
            <person name="Dodson R.J."/>
            <person name="Madupu R."/>
            <person name="Brinkac L.M."/>
            <person name="Daugherty S.C."/>
            <person name="DeBoy R.T."/>
            <person name="Durkin A.S."/>
            <person name="Gwinn M.L."/>
            <person name="Kolonay J.F."/>
            <person name="Sullivan S.A."/>
            <person name="Haft D.H."/>
            <person name="Selengut J."/>
            <person name="Davidsen T.M."/>
            <person name="Zafar N."/>
            <person name="White O."/>
            <person name="Tran B."/>
            <person name="Romero C."/>
            <person name="Forberger H.A."/>
            <person name="Weidman J.F."/>
            <person name="Khouri H.M."/>
            <person name="Feldblyum T.V."/>
            <person name="Utterback T.R."/>
            <person name="Van Aken S.E."/>
            <person name="Lovley D.R."/>
            <person name="Fraser C.M."/>
        </authorList>
    </citation>
    <scope>NUCLEOTIDE SEQUENCE [LARGE SCALE GENOMIC DNA]</scope>
    <source>
        <strain>ATCC 51573 / DSM 12127 / PCA</strain>
    </source>
</reference>
<protein>
    <recommendedName>
        <fullName evidence="1">NADH-quinone oxidoreductase subunit A 2</fullName>
        <ecNumber evidence="1">7.1.1.-</ecNumber>
    </recommendedName>
    <alternativeName>
        <fullName evidence="1">NADH dehydrogenase I subunit A 2</fullName>
    </alternativeName>
    <alternativeName>
        <fullName evidence="1">NDH-1 subunit A 2</fullName>
    </alternativeName>
    <alternativeName>
        <fullName evidence="1">NUO1 2</fullName>
    </alternativeName>
</protein>
<feature type="chain" id="PRO_0000362694" description="NADH-quinone oxidoreductase subunit A 2">
    <location>
        <begin position="1"/>
        <end position="142"/>
    </location>
</feature>
<feature type="transmembrane region" description="Helical" evidence="1">
    <location>
        <begin position="18"/>
        <end position="38"/>
    </location>
</feature>
<feature type="transmembrane region" description="Helical" evidence="1">
    <location>
        <begin position="73"/>
        <end position="93"/>
    </location>
</feature>
<feature type="transmembrane region" description="Helical" evidence="1">
    <location>
        <begin position="104"/>
        <end position="124"/>
    </location>
</feature>
<comment type="function">
    <text evidence="1">NDH-1 shuttles electrons from NADH, via FMN and iron-sulfur (Fe-S) centers, to quinones in the respiratory chain. The immediate electron acceptor for the enzyme in this species is believed to be ubiquinone. Couples the redox reaction to proton translocation (for every two electrons transferred, four hydrogen ions are translocated across the cytoplasmic membrane), and thus conserves the redox energy in a proton gradient.</text>
</comment>
<comment type="catalytic activity">
    <reaction evidence="1">
        <text>a quinone + NADH + 5 H(+)(in) = a quinol + NAD(+) + 4 H(+)(out)</text>
        <dbReference type="Rhea" id="RHEA:57888"/>
        <dbReference type="ChEBI" id="CHEBI:15378"/>
        <dbReference type="ChEBI" id="CHEBI:24646"/>
        <dbReference type="ChEBI" id="CHEBI:57540"/>
        <dbReference type="ChEBI" id="CHEBI:57945"/>
        <dbReference type="ChEBI" id="CHEBI:132124"/>
    </reaction>
</comment>
<comment type="subunit">
    <text evidence="1">NDH-1 is composed of 14 different subunits. Subunits NuoA, H, J, K, L, M, N constitute the membrane sector of the complex.</text>
</comment>
<comment type="subcellular location">
    <subcellularLocation>
        <location evidence="1">Cell inner membrane</location>
        <topology evidence="1">Multi-pass membrane protein</topology>
    </subcellularLocation>
</comment>
<comment type="similarity">
    <text evidence="1">Belongs to the complex I subunit 3 family.</text>
</comment>
<dbReference type="EC" id="7.1.1.-" evidence="1"/>
<dbReference type="EMBL" id="AE017180">
    <property type="protein sequence ID" value="AAR36835.1"/>
    <property type="molecule type" value="Genomic_DNA"/>
</dbReference>
<dbReference type="RefSeq" id="NP_954485.1">
    <property type="nucleotide sequence ID" value="NC_002939.5"/>
</dbReference>
<dbReference type="RefSeq" id="WP_010944055.1">
    <property type="nucleotide sequence ID" value="NC_002939.5"/>
</dbReference>
<dbReference type="SMR" id="Q746S3"/>
<dbReference type="FunCoup" id="Q746S3">
    <property type="interactions" value="197"/>
</dbReference>
<dbReference type="STRING" id="243231.GSU3445"/>
<dbReference type="TCDB" id="3.D.1.5.1">
    <property type="family name" value="the h+ or na+-translocating nadh dehydrogenase (ndh) family"/>
</dbReference>
<dbReference type="DNASU" id="2688147"/>
<dbReference type="EnsemblBacteria" id="AAR36835">
    <property type="protein sequence ID" value="AAR36835"/>
    <property type="gene ID" value="GSU3445"/>
</dbReference>
<dbReference type="KEGG" id="gsu:GSU3445"/>
<dbReference type="PATRIC" id="fig|243231.5.peg.3467"/>
<dbReference type="eggNOG" id="COG0838">
    <property type="taxonomic scope" value="Bacteria"/>
</dbReference>
<dbReference type="HOGENOM" id="CLU_119549_2_0_7"/>
<dbReference type="InParanoid" id="Q746S3"/>
<dbReference type="OrthoDB" id="9791970at2"/>
<dbReference type="Proteomes" id="UP000000577">
    <property type="component" value="Chromosome"/>
</dbReference>
<dbReference type="GO" id="GO:0005886">
    <property type="term" value="C:plasma membrane"/>
    <property type="evidence" value="ECO:0007669"/>
    <property type="project" value="UniProtKB-SubCell"/>
</dbReference>
<dbReference type="GO" id="GO:0045271">
    <property type="term" value="C:respiratory chain complex I"/>
    <property type="evidence" value="ECO:0000318"/>
    <property type="project" value="GO_Central"/>
</dbReference>
<dbReference type="GO" id="GO:0008137">
    <property type="term" value="F:NADH dehydrogenase (ubiquinone) activity"/>
    <property type="evidence" value="ECO:0000318"/>
    <property type="project" value="GO_Central"/>
</dbReference>
<dbReference type="GO" id="GO:0050136">
    <property type="term" value="F:NADH:ubiquinone reductase (non-electrogenic) activity"/>
    <property type="evidence" value="ECO:0007669"/>
    <property type="project" value="UniProtKB-UniRule"/>
</dbReference>
<dbReference type="GO" id="GO:0048038">
    <property type="term" value="F:quinone binding"/>
    <property type="evidence" value="ECO:0007669"/>
    <property type="project" value="UniProtKB-KW"/>
</dbReference>
<dbReference type="FunFam" id="1.20.58.1610:FF:000013">
    <property type="entry name" value="NADH-quinone oxidoreductase subunit A 2"/>
    <property type="match status" value="1"/>
</dbReference>
<dbReference type="Gene3D" id="1.20.58.1610">
    <property type="entry name" value="NADH:ubiquinone/plastoquinone oxidoreductase, chain 3"/>
    <property type="match status" value="1"/>
</dbReference>
<dbReference type="HAMAP" id="MF_01394">
    <property type="entry name" value="NDH1_NuoA"/>
    <property type="match status" value="1"/>
</dbReference>
<dbReference type="InterPro" id="IPR023043">
    <property type="entry name" value="NAD(P)H_OxRDtase_bac/plastid"/>
</dbReference>
<dbReference type="InterPro" id="IPR000440">
    <property type="entry name" value="NADH_UbQ/plastoQ_OxRdtase_su3"/>
</dbReference>
<dbReference type="InterPro" id="IPR038430">
    <property type="entry name" value="NDAH_ubi_oxred_su3_sf"/>
</dbReference>
<dbReference type="PANTHER" id="PTHR11058:SF21">
    <property type="entry name" value="NADH-QUINONE OXIDOREDUCTASE SUBUNIT A"/>
    <property type="match status" value="1"/>
</dbReference>
<dbReference type="PANTHER" id="PTHR11058">
    <property type="entry name" value="NADH-UBIQUINONE OXIDOREDUCTASE CHAIN 3"/>
    <property type="match status" value="1"/>
</dbReference>
<dbReference type="Pfam" id="PF00507">
    <property type="entry name" value="Oxidored_q4"/>
    <property type="match status" value="1"/>
</dbReference>
<sequence length="142" mass="15776">MQPAGISHSLFPSLPPEFLPLALYTLAASILIGVLLLAAWWLGAKTTNRNKELPYESGAIPTGSARLAYPVPFYLIAIFFIVFDVEAAFIFAWATAWRELGLQGLVHITFFIVILLLGLVWLWLKGGLDWGPSRARRGHVRD</sequence>
<evidence type="ECO:0000255" key="1">
    <source>
        <dbReference type="HAMAP-Rule" id="MF_01394"/>
    </source>
</evidence>
<accession>Q746S3</accession>
<proteinExistence type="inferred from homology"/>
<organism>
    <name type="scientific">Geobacter sulfurreducens (strain ATCC 51573 / DSM 12127 / PCA)</name>
    <dbReference type="NCBI Taxonomy" id="243231"/>
    <lineage>
        <taxon>Bacteria</taxon>
        <taxon>Pseudomonadati</taxon>
        <taxon>Thermodesulfobacteriota</taxon>
        <taxon>Desulfuromonadia</taxon>
        <taxon>Geobacterales</taxon>
        <taxon>Geobacteraceae</taxon>
        <taxon>Geobacter</taxon>
    </lineage>
</organism>